<protein>
    <recommendedName>
        <fullName evidence="1">UDP-N-acetylmuramoylalanine--D-glutamate ligase</fullName>
        <ecNumber evidence="1">6.3.2.9</ecNumber>
    </recommendedName>
    <alternativeName>
        <fullName evidence="1">D-glutamic acid-adding enzyme</fullName>
    </alternativeName>
    <alternativeName>
        <fullName evidence="1">UDP-N-acetylmuramoyl-L-alanyl-D-glutamate synthetase</fullName>
    </alternativeName>
</protein>
<proteinExistence type="inferred from homology"/>
<sequence length="420" mass="46021">MNNRRVLVLGSGVTGKSAAEFLRNRGDYVIGVDGSAEALHSCHFFCERYLDSAEEFPEDIDLCVRSPGIKTSHPFVVEAKHRGIPIVTDIQLAFQDPEFHRYPSLGVTGSAGKTTTVLFLVHLLRSVGMSACAMGNIGFPILQAMYQKGIRVVEISSFQLAEQEIEIPVLSAAAILNISENHLDYHYTLQAYTEAKSHIAKCLQSPESLWVGDGVSFGKSYLEATREINLVLDKGSALKPLYLHDRNNYCAGYALANEVTKIPLESFLQAVLTFDKPPHRIEYLGEKDGVRYINDSKATTMSSVEKALIAVKENIIVILGGRNKGSNFASLIPVLTQTVKHVVAMGECRTEIAQALSSSNLPLTQAQDLQEAVHVAQSIAQPGDVILLSPGCASFDQFRSFEERGDCFKQLVGEMEALKI</sequence>
<dbReference type="EC" id="6.3.2.9" evidence="1"/>
<dbReference type="EMBL" id="CR848038">
    <property type="protein sequence ID" value="CAH64274.1"/>
    <property type="molecule type" value="Genomic_DNA"/>
</dbReference>
<dbReference type="RefSeq" id="WP_011097361.1">
    <property type="nucleotide sequence ID" value="NC_004552.2"/>
</dbReference>
<dbReference type="SMR" id="Q5L521"/>
<dbReference type="GeneID" id="93024386"/>
<dbReference type="KEGG" id="cab:CAB833"/>
<dbReference type="eggNOG" id="COG0771">
    <property type="taxonomic scope" value="Bacteria"/>
</dbReference>
<dbReference type="HOGENOM" id="CLU_032540_0_0_0"/>
<dbReference type="OrthoDB" id="9809796at2"/>
<dbReference type="UniPathway" id="UPA00219"/>
<dbReference type="Proteomes" id="UP000001012">
    <property type="component" value="Chromosome"/>
</dbReference>
<dbReference type="GO" id="GO:0005737">
    <property type="term" value="C:cytoplasm"/>
    <property type="evidence" value="ECO:0007669"/>
    <property type="project" value="UniProtKB-SubCell"/>
</dbReference>
<dbReference type="GO" id="GO:0005524">
    <property type="term" value="F:ATP binding"/>
    <property type="evidence" value="ECO:0007669"/>
    <property type="project" value="UniProtKB-UniRule"/>
</dbReference>
<dbReference type="GO" id="GO:0008764">
    <property type="term" value="F:UDP-N-acetylmuramoylalanine-D-glutamate ligase activity"/>
    <property type="evidence" value="ECO:0007669"/>
    <property type="project" value="UniProtKB-UniRule"/>
</dbReference>
<dbReference type="GO" id="GO:0051301">
    <property type="term" value="P:cell division"/>
    <property type="evidence" value="ECO:0007669"/>
    <property type="project" value="UniProtKB-KW"/>
</dbReference>
<dbReference type="GO" id="GO:0071555">
    <property type="term" value="P:cell wall organization"/>
    <property type="evidence" value="ECO:0007669"/>
    <property type="project" value="UniProtKB-KW"/>
</dbReference>
<dbReference type="GO" id="GO:0009252">
    <property type="term" value="P:peptidoglycan biosynthetic process"/>
    <property type="evidence" value="ECO:0007669"/>
    <property type="project" value="UniProtKB-UniRule"/>
</dbReference>
<dbReference type="GO" id="GO:0008360">
    <property type="term" value="P:regulation of cell shape"/>
    <property type="evidence" value="ECO:0007669"/>
    <property type="project" value="UniProtKB-KW"/>
</dbReference>
<dbReference type="Gene3D" id="3.90.190.20">
    <property type="entry name" value="Mur ligase, C-terminal domain"/>
    <property type="match status" value="1"/>
</dbReference>
<dbReference type="Gene3D" id="3.40.1190.10">
    <property type="entry name" value="Mur-like, catalytic domain"/>
    <property type="match status" value="1"/>
</dbReference>
<dbReference type="Gene3D" id="3.40.50.720">
    <property type="entry name" value="NAD(P)-binding Rossmann-like Domain"/>
    <property type="match status" value="1"/>
</dbReference>
<dbReference type="HAMAP" id="MF_00639">
    <property type="entry name" value="MurD"/>
    <property type="match status" value="1"/>
</dbReference>
<dbReference type="InterPro" id="IPR036565">
    <property type="entry name" value="Mur-like_cat_sf"/>
</dbReference>
<dbReference type="InterPro" id="IPR004101">
    <property type="entry name" value="Mur_ligase_C"/>
</dbReference>
<dbReference type="InterPro" id="IPR036615">
    <property type="entry name" value="Mur_ligase_C_dom_sf"/>
</dbReference>
<dbReference type="InterPro" id="IPR013221">
    <property type="entry name" value="Mur_ligase_cen"/>
</dbReference>
<dbReference type="InterPro" id="IPR005762">
    <property type="entry name" value="MurD"/>
</dbReference>
<dbReference type="NCBIfam" id="TIGR01087">
    <property type="entry name" value="murD"/>
    <property type="match status" value="1"/>
</dbReference>
<dbReference type="PANTHER" id="PTHR43692">
    <property type="entry name" value="UDP-N-ACETYLMURAMOYLALANINE--D-GLUTAMATE LIGASE"/>
    <property type="match status" value="1"/>
</dbReference>
<dbReference type="PANTHER" id="PTHR43692:SF1">
    <property type="entry name" value="UDP-N-ACETYLMURAMOYLALANINE--D-GLUTAMATE LIGASE"/>
    <property type="match status" value="1"/>
</dbReference>
<dbReference type="Pfam" id="PF02875">
    <property type="entry name" value="Mur_ligase_C"/>
    <property type="match status" value="1"/>
</dbReference>
<dbReference type="Pfam" id="PF08245">
    <property type="entry name" value="Mur_ligase_M"/>
    <property type="match status" value="1"/>
</dbReference>
<dbReference type="Pfam" id="PF21799">
    <property type="entry name" value="MurD-like_N"/>
    <property type="match status" value="1"/>
</dbReference>
<dbReference type="SUPFAM" id="SSF51984">
    <property type="entry name" value="MurCD N-terminal domain"/>
    <property type="match status" value="1"/>
</dbReference>
<dbReference type="SUPFAM" id="SSF53623">
    <property type="entry name" value="MurD-like peptide ligases, catalytic domain"/>
    <property type="match status" value="1"/>
</dbReference>
<dbReference type="SUPFAM" id="SSF53244">
    <property type="entry name" value="MurD-like peptide ligases, peptide-binding domain"/>
    <property type="match status" value="1"/>
</dbReference>
<comment type="function">
    <text evidence="1">Cell wall formation. Catalyzes the addition of glutamate to the nucleotide precursor UDP-N-acetylmuramoyl-L-alanine (UMA).</text>
</comment>
<comment type="catalytic activity">
    <reaction evidence="1">
        <text>UDP-N-acetyl-alpha-D-muramoyl-L-alanine + D-glutamate + ATP = UDP-N-acetyl-alpha-D-muramoyl-L-alanyl-D-glutamate + ADP + phosphate + H(+)</text>
        <dbReference type="Rhea" id="RHEA:16429"/>
        <dbReference type="ChEBI" id="CHEBI:15378"/>
        <dbReference type="ChEBI" id="CHEBI:29986"/>
        <dbReference type="ChEBI" id="CHEBI:30616"/>
        <dbReference type="ChEBI" id="CHEBI:43474"/>
        <dbReference type="ChEBI" id="CHEBI:83898"/>
        <dbReference type="ChEBI" id="CHEBI:83900"/>
        <dbReference type="ChEBI" id="CHEBI:456216"/>
        <dbReference type="EC" id="6.3.2.9"/>
    </reaction>
</comment>
<comment type="pathway">
    <text evidence="1">Cell wall biogenesis; peptidoglycan biosynthesis.</text>
</comment>
<comment type="subcellular location">
    <subcellularLocation>
        <location evidence="1">Cytoplasm</location>
    </subcellularLocation>
</comment>
<comment type="similarity">
    <text evidence="1">Belongs to the MurCDEF family.</text>
</comment>
<organism>
    <name type="scientific">Chlamydia abortus (strain DSM 27085 / S26/3)</name>
    <name type="common">Chlamydophila abortus</name>
    <dbReference type="NCBI Taxonomy" id="218497"/>
    <lineage>
        <taxon>Bacteria</taxon>
        <taxon>Pseudomonadati</taxon>
        <taxon>Chlamydiota</taxon>
        <taxon>Chlamydiia</taxon>
        <taxon>Chlamydiales</taxon>
        <taxon>Chlamydiaceae</taxon>
        <taxon>Chlamydia/Chlamydophila group</taxon>
        <taxon>Chlamydia</taxon>
    </lineage>
</organism>
<keyword id="KW-0067">ATP-binding</keyword>
<keyword id="KW-0131">Cell cycle</keyword>
<keyword id="KW-0132">Cell division</keyword>
<keyword id="KW-0133">Cell shape</keyword>
<keyword id="KW-0961">Cell wall biogenesis/degradation</keyword>
<keyword id="KW-0963">Cytoplasm</keyword>
<keyword id="KW-0436">Ligase</keyword>
<keyword id="KW-0547">Nucleotide-binding</keyword>
<keyword id="KW-0573">Peptidoglycan synthesis</keyword>
<reference key="1">
    <citation type="journal article" date="2005" name="Genome Res.">
        <title>The Chlamydophila abortus genome sequence reveals an array of variable proteins that contribute to interspecies variation.</title>
        <authorList>
            <person name="Thomson N.R."/>
            <person name="Yeats C."/>
            <person name="Bell K."/>
            <person name="Holden M.T.G."/>
            <person name="Bentley S.D."/>
            <person name="Livingstone M."/>
            <person name="Cerdeno-Tarraga A.-M."/>
            <person name="Harris B."/>
            <person name="Doggett J."/>
            <person name="Ormond D."/>
            <person name="Mungall K."/>
            <person name="Clarke K."/>
            <person name="Feltwell T."/>
            <person name="Hance Z."/>
            <person name="Sanders M."/>
            <person name="Quail M.A."/>
            <person name="Price C."/>
            <person name="Barrell B.G."/>
            <person name="Parkhill J."/>
            <person name="Longbottom D."/>
        </authorList>
    </citation>
    <scope>NUCLEOTIDE SEQUENCE [LARGE SCALE GENOMIC DNA]</scope>
    <source>
        <strain>DSM 27085 / S26/3</strain>
    </source>
</reference>
<feature type="chain" id="PRO_0000108995" description="UDP-N-acetylmuramoylalanine--D-glutamate ligase">
    <location>
        <begin position="1"/>
        <end position="420"/>
    </location>
</feature>
<feature type="binding site" evidence="1">
    <location>
        <begin position="109"/>
        <end position="115"/>
    </location>
    <ligand>
        <name>ATP</name>
        <dbReference type="ChEBI" id="CHEBI:30616"/>
    </ligand>
</feature>
<name>MURD_CHLAB</name>
<evidence type="ECO:0000255" key="1">
    <source>
        <dbReference type="HAMAP-Rule" id="MF_00639"/>
    </source>
</evidence>
<accession>Q5L521</accession>
<gene>
    <name evidence="1" type="primary">murD</name>
    <name type="ordered locus">CAB833</name>
</gene>